<feature type="initiator methionine" description="Removed" evidence="1">
    <location>
        <position position="1"/>
    </location>
</feature>
<feature type="chain" id="PRO_0000135345" description="Glutamine--fructose-6-phosphate aminotransferase [isomerizing]">
    <location>
        <begin position="2"/>
        <end position="604"/>
    </location>
</feature>
<feature type="domain" description="Glutamine amidotransferase type-2" evidence="1">
    <location>
        <begin position="2"/>
        <end position="219"/>
    </location>
</feature>
<feature type="domain" description="SIS 1" evidence="1">
    <location>
        <begin position="279"/>
        <end position="427"/>
    </location>
</feature>
<feature type="domain" description="SIS 2" evidence="1">
    <location>
        <begin position="454"/>
        <end position="594"/>
    </location>
</feature>
<feature type="active site" description="Nucleophile; for GATase activity" evidence="1">
    <location>
        <position position="2"/>
    </location>
</feature>
<feature type="active site" description="For Fru-6P isomerization activity" evidence="1">
    <location>
        <position position="599"/>
    </location>
</feature>
<protein>
    <recommendedName>
        <fullName evidence="1">Glutamine--fructose-6-phosphate aminotransferase [isomerizing]</fullName>
        <ecNumber evidence="1">2.6.1.16</ecNumber>
    </recommendedName>
    <alternativeName>
        <fullName evidence="1">D-fructose-6-phosphate amidotransferase</fullName>
    </alternativeName>
    <alternativeName>
        <fullName evidence="1">GFAT</fullName>
    </alternativeName>
    <alternativeName>
        <fullName evidence="1">Glucosamine-6-phosphate synthase</fullName>
    </alternativeName>
    <alternativeName>
        <fullName evidence="1">Hexosephosphate aminotransferase</fullName>
    </alternativeName>
    <alternativeName>
        <fullName evidence="1">L-glutamine--D-fructose-6-phosphate amidotransferase</fullName>
    </alternativeName>
</protein>
<proteinExistence type="inferred from homology"/>
<reference key="1">
    <citation type="journal article" date="2004" name="Nat. Genet.">
        <title>Evidence in the Legionella pneumophila genome for exploitation of host cell functions and high genome plasticity.</title>
        <authorList>
            <person name="Cazalet C."/>
            <person name="Rusniok C."/>
            <person name="Brueggemann H."/>
            <person name="Zidane N."/>
            <person name="Magnier A."/>
            <person name="Ma L."/>
            <person name="Tichit M."/>
            <person name="Jarraud S."/>
            <person name="Bouchier C."/>
            <person name="Vandenesch F."/>
            <person name="Kunst F."/>
            <person name="Etienne J."/>
            <person name="Glaser P."/>
            <person name="Buchrieser C."/>
        </authorList>
    </citation>
    <scope>NUCLEOTIDE SEQUENCE [LARGE SCALE GENOMIC DNA]</scope>
    <source>
        <strain>Paris</strain>
    </source>
</reference>
<sequence length="604" mass="66392">MCGIMGAVSERDISKILLEGLRRLEYRGYDSAGIAVIDSQDRLKRVRIQGKVQNLADAMQETAIAGNTGIAHTRWATHGKPSEQNAHPHLSHGEIALVHNGIIENHEHLRQQLITYGYQFTSETDTEVAAHLIHYHYQQHENLLLAVQKAAAEMQGAFALGVIHQKRPEELVAIRKGSPLVLGFGIGENFIASDALALRSFAQSVIYMEEGDSACVTTQDIKVYDSNRILVQRAVHPLNSDSEIVNKGPYRHFMLKEIFEQSKVITDTLESRINSIDVLRASFGEKASHIFPMVKNIHIVACGTSYHAGMIAKYWLESLAGLPTQVEIASEYRYRDVVVPDNTLFITVSQSGETADTLAALFKAKQSNYLASLAICNVATSTLVREADCVFLTRAGIEIGVASTKAFTTQLAAFLMLAAALCKDNRAQEVLRQLQELPACCERVLQMNEEVESLASLFVNKVHALFLGRGVQYPVALEGALKLKEISYIHAEAYPAGELKHGPLALVDKDMPVIAVAPNDELLDKLKSNLHEVSARGGQLFVFVDDSQNWKANGARLIKVPSCGAWLAPIVYTIPLQLLAYHVAVAKGTDVDQPRNLAKSVTVE</sequence>
<comment type="function">
    <text evidence="1">Catalyzes the first step in hexosamine metabolism, converting fructose-6P into glucosamine-6P using glutamine as a nitrogen source.</text>
</comment>
<comment type="catalytic activity">
    <reaction evidence="1">
        <text>D-fructose 6-phosphate + L-glutamine = D-glucosamine 6-phosphate + L-glutamate</text>
        <dbReference type="Rhea" id="RHEA:13237"/>
        <dbReference type="ChEBI" id="CHEBI:29985"/>
        <dbReference type="ChEBI" id="CHEBI:58359"/>
        <dbReference type="ChEBI" id="CHEBI:58725"/>
        <dbReference type="ChEBI" id="CHEBI:61527"/>
        <dbReference type="EC" id="2.6.1.16"/>
    </reaction>
</comment>
<comment type="subunit">
    <text evidence="1">Homodimer.</text>
</comment>
<comment type="subcellular location">
    <subcellularLocation>
        <location evidence="1">Cytoplasm</location>
    </subcellularLocation>
</comment>
<accession>Q5X153</accession>
<dbReference type="EC" id="2.6.1.16" evidence="1"/>
<dbReference type="EMBL" id="CR628336">
    <property type="protein sequence ID" value="CAH14046.1"/>
    <property type="molecule type" value="Genomic_DNA"/>
</dbReference>
<dbReference type="RefSeq" id="WP_014844885.1">
    <property type="nucleotide sequence ID" value="NC_006368.1"/>
</dbReference>
<dbReference type="SMR" id="Q5X153"/>
<dbReference type="KEGG" id="lpp:lpp2893"/>
<dbReference type="LegioList" id="lpp2893"/>
<dbReference type="HOGENOM" id="CLU_012520_5_2_6"/>
<dbReference type="GO" id="GO:0005829">
    <property type="term" value="C:cytosol"/>
    <property type="evidence" value="ECO:0007669"/>
    <property type="project" value="TreeGrafter"/>
</dbReference>
<dbReference type="GO" id="GO:0097367">
    <property type="term" value="F:carbohydrate derivative binding"/>
    <property type="evidence" value="ECO:0007669"/>
    <property type="project" value="InterPro"/>
</dbReference>
<dbReference type="GO" id="GO:0004360">
    <property type="term" value="F:glutamine-fructose-6-phosphate transaminase (isomerizing) activity"/>
    <property type="evidence" value="ECO:0007669"/>
    <property type="project" value="UniProtKB-UniRule"/>
</dbReference>
<dbReference type="GO" id="GO:0005975">
    <property type="term" value="P:carbohydrate metabolic process"/>
    <property type="evidence" value="ECO:0007669"/>
    <property type="project" value="UniProtKB-UniRule"/>
</dbReference>
<dbReference type="GO" id="GO:0006002">
    <property type="term" value="P:fructose 6-phosphate metabolic process"/>
    <property type="evidence" value="ECO:0007669"/>
    <property type="project" value="TreeGrafter"/>
</dbReference>
<dbReference type="GO" id="GO:0006487">
    <property type="term" value="P:protein N-linked glycosylation"/>
    <property type="evidence" value="ECO:0007669"/>
    <property type="project" value="TreeGrafter"/>
</dbReference>
<dbReference type="GO" id="GO:0006047">
    <property type="term" value="P:UDP-N-acetylglucosamine metabolic process"/>
    <property type="evidence" value="ECO:0007669"/>
    <property type="project" value="TreeGrafter"/>
</dbReference>
<dbReference type="CDD" id="cd00714">
    <property type="entry name" value="GFAT"/>
    <property type="match status" value="1"/>
</dbReference>
<dbReference type="CDD" id="cd05008">
    <property type="entry name" value="SIS_GlmS_GlmD_1"/>
    <property type="match status" value="1"/>
</dbReference>
<dbReference type="CDD" id="cd05009">
    <property type="entry name" value="SIS_GlmS_GlmD_2"/>
    <property type="match status" value="1"/>
</dbReference>
<dbReference type="FunFam" id="3.40.50.10490:FF:000001">
    <property type="entry name" value="Glutamine--fructose-6-phosphate aminotransferase [isomerizing]"/>
    <property type="match status" value="1"/>
</dbReference>
<dbReference type="FunFam" id="3.60.20.10:FF:000006">
    <property type="entry name" value="Glutamine--fructose-6-phosphate aminotransferase [isomerizing]"/>
    <property type="match status" value="1"/>
</dbReference>
<dbReference type="Gene3D" id="3.40.50.10490">
    <property type="entry name" value="Glucose-6-phosphate isomerase like protein, domain 1"/>
    <property type="match status" value="2"/>
</dbReference>
<dbReference type="Gene3D" id="3.60.20.10">
    <property type="entry name" value="Glutamine Phosphoribosylpyrophosphate, subunit 1, domain 1"/>
    <property type="match status" value="1"/>
</dbReference>
<dbReference type="HAMAP" id="MF_00164">
    <property type="entry name" value="GlmS"/>
    <property type="match status" value="1"/>
</dbReference>
<dbReference type="InterPro" id="IPR017932">
    <property type="entry name" value="GATase_2_dom"/>
</dbReference>
<dbReference type="InterPro" id="IPR005855">
    <property type="entry name" value="GFAT"/>
</dbReference>
<dbReference type="InterPro" id="IPR047084">
    <property type="entry name" value="GFAT_N"/>
</dbReference>
<dbReference type="InterPro" id="IPR035466">
    <property type="entry name" value="GlmS/AgaS_SIS"/>
</dbReference>
<dbReference type="InterPro" id="IPR035490">
    <property type="entry name" value="GlmS/FrlB_SIS"/>
</dbReference>
<dbReference type="InterPro" id="IPR029055">
    <property type="entry name" value="Ntn_hydrolases_N"/>
</dbReference>
<dbReference type="InterPro" id="IPR001347">
    <property type="entry name" value="SIS_dom"/>
</dbReference>
<dbReference type="InterPro" id="IPR046348">
    <property type="entry name" value="SIS_dom_sf"/>
</dbReference>
<dbReference type="NCBIfam" id="TIGR01135">
    <property type="entry name" value="glmS"/>
    <property type="match status" value="1"/>
</dbReference>
<dbReference type="NCBIfam" id="NF001484">
    <property type="entry name" value="PRK00331.1"/>
    <property type="match status" value="1"/>
</dbReference>
<dbReference type="PANTHER" id="PTHR10937">
    <property type="entry name" value="GLUCOSAMINE--FRUCTOSE-6-PHOSPHATE AMINOTRANSFERASE, ISOMERIZING"/>
    <property type="match status" value="1"/>
</dbReference>
<dbReference type="PANTHER" id="PTHR10937:SF0">
    <property type="entry name" value="GLUTAMINE--FRUCTOSE-6-PHOSPHATE TRANSAMINASE (ISOMERIZING)"/>
    <property type="match status" value="1"/>
</dbReference>
<dbReference type="Pfam" id="PF13522">
    <property type="entry name" value="GATase_6"/>
    <property type="match status" value="1"/>
</dbReference>
<dbReference type="Pfam" id="PF01380">
    <property type="entry name" value="SIS"/>
    <property type="match status" value="2"/>
</dbReference>
<dbReference type="SUPFAM" id="SSF56235">
    <property type="entry name" value="N-terminal nucleophile aminohydrolases (Ntn hydrolases)"/>
    <property type="match status" value="1"/>
</dbReference>
<dbReference type="SUPFAM" id="SSF53697">
    <property type="entry name" value="SIS domain"/>
    <property type="match status" value="1"/>
</dbReference>
<dbReference type="PROSITE" id="PS51278">
    <property type="entry name" value="GATASE_TYPE_2"/>
    <property type="match status" value="1"/>
</dbReference>
<dbReference type="PROSITE" id="PS51464">
    <property type="entry name" value="SIS"/>
    <property type="match status" value="2"/>
</dbReference>
<gene>
    <name evidence="1" type="primary">glmS</name>
    <name type="ordered locus">lpp2893</name>
</gene>
<organism>
    <name type="scientific">Legionella pneumophila (strain Paris)</name>
    <dbReference type="NCBI Taxonomy" id="297246"/>
    <lineage>
        <taxon>Bacteria</taxon>
        <taxon>Pseudomonadati</taxon>
        <taxon>Pseudomonadota</taxon>
        <taxon>Gammaproteobacteria</taxon>
        <taxon>Legionellales</taxon>
        <taxon>Legionellaceae</taxon>
        <taxon>Legionella</taxon>
    </lineage>
</organism>
<name>GLMS_LEGPA</name>
<keyword id="KW-0032">Aminotransferase</keyword>
<keyword id="KW-0963">Cytoplasm</keyword>
<keyword id="KW-0315">Glutamine amidotransferase</keyword>
<keyword id="KW-0677">Repeat</keyword>
<keyword id="KW-0808">Transferase</keyword>
<evidence type="ECO:0000255" key="1">
    <source>
        <dbReference type="HAMAP-Rule" id="MF_00164"/>
    </source>
</evidence>